<keyword id="KW-0067">ATP-binding</keyword>
<keyword id="KW-0175">Coiled coil</keyword>
<keyword id="KW-0347">Helicase</keyword>
<keyword id="KW-0378">Hydrolase</keyword>
<keyword id="KW-0547">Nucleotide-binding</keyword>
<keyword id="KW-0539">Nucleus</keyword>
<keyword id="KW-1185">Reference proteome</keyword>
<keyword id="KW-0690">Ribosome biogenesis</keyword>
<keyword id="KW-0694">RNA-binding</keyword>
<keyword id="KW-0698">rRNA processing</keyword>
<accession>Q5B8F4</accession>
<accession>C8VID7</accession>
<proteinExistence type="inferred from homology"/>
<evidence type="ECO:0000250" key="1">
    <source>
        <dbReference type="UniProtKB" id="P25808"/>
    </source>
</evidence>
<evidence type="ECO:0000255" key="2"/>
<evidence type="ECO:0000255" key="3">
    <source>
        <dbReference type="PROSITE-ProRule" id="PRU00541"/>
    </source>
</evidence>
<evidence type="ECO:0000255" key="4">
    <source>
        <dbReference type="PROSITE-ProRule" id="PRU00542"/>
    </source>
</evidence>
<evidence type="ECO:0000256" key="5">
    <source>
        <dbReference type="SAM" id="MobiDB-lite"/>
    </source>
</evidence>
<evidence type="ECO:0000305" key="6"/>
<name>SPB4_EMENI</name>
<gene>
    <name evidence="1" type="primary">spb4</name>
    <name type="ORF">AN3176</name>
</gene>
<comment type="function">
    <text evidence="1">ATP-binding RNA helicase involved in the biogenesis of 60S ribosomal subunits. Binds 90S pre-ribosomal particles and dissociates from pre-60S ribosomal particles after processing of 27SB pre-rRNA. Required for the normal formation of 18S rRNA through the processing of pre-rRNAs at sites A0, A1 and A2, and the normal formation of 25S and 5.8S rRNAs through the processing of pre-rRNAs at sites C1 and C2.</text>
</comment>
<comment type="catalytic activity">
    <reaction evidence="1">
        <text>ATP + H2O = ADP + phosphate + H(+)</text>
        <dbReference type="Rhea" id="RHEA:13065"/>
        <dbReference type="ChEBI" id="CHEBI:15377"/>
        <dbReference type="ChEBI" id="CHEBI:15378"/>
        <dbReference type="ChEBI" id="CHEBI:30616"/>
        <dbReference type="ChEBI" id="CHEBI:43474"/>
        <dbReference type="ChEBI" id="CHEBI:456216"/>
        <dbReference type="EC" id="3.6.4.13"/>
    </reaction>
</comment>
<comment type="subunit">
    <text evidence="1">Component of pre-60S ribosomal complexes.</text>
</comment>
<comment type="subcellular location">
    <subcellularLocation>
        <location evidence="1">Nucleus</location>
        <location evidence="1">Nucleolus</location>
    </subcellularLocation>
</comment>
<comment type="domain">
    <text>The Q motif is unique to and characteristic of the DEAD box family of RNA helicases and controls ATP binding and hydrolysis.</text>
</comment>
<comment type="similarity">
    <text evidence="6">Belongs to the DEAD box helicase family. DDX55/SPB4 subfamily.</text>
</comment>
<dbReference type="EC" id="3.6.4.13" evidence="1"/>
<dbReference type="EMBL" id="AACD01000052">
    <property type="protein sequence ID" value="EAA62940.1"/>
    <property type="molecule type" value="Genomic_DNA"/>
</dbReference>
<dbReference type="EMBL" id="BN001306">
    <property type="protein sequence ID" value="CBF83255.1"/>
    <property type="molecule type" value="Genomic_DNA"/>
</dbReference>
<dbReference type="RefSeq" id="XP_660780.1">
    <property type="nucleotide sequence ID" value="XM_655688.1"/>
</dbReference>
<dbReference type="SMR" id="Q5B8F4"/>
<dbReference type="FunCoup" id="Q5B8F4">
    <property type="interactions" value="1132"/>
</dbReference>
<dbReference type="STRING" id="227321.Q5B8F4"/>
<dbReference type="EnsemblFungi" id="CBF83255">
    <property type="protein sequence ID" value="CBF83255"/>
    <property type="gene ID" value="ANIA_03176"/>
</dbReference>
<dbReference type="KEGG" id="ani:ANIA_03176"/>
<dbReference type="VEuPathDB" id="FungiDB:AN3176"/>
<dbReference type="eggNOG" id="KOG0345">
    <property type="taxonomic scope" value="Eukaryota"/>
</dbReference>
<dbReference type="HOGENOM" id="CLU_003041_26_4_1"/>
<dbReference type="InParanoid" id="Q5B8F4"/>
<dbReference type="OMA" id="AYKEHEC"/>
<dbReference type="OrthoDB" id="7396459at2759"/>
<dbReference type="Proteomes" id="UP000000560">
    <property type="component" value="Chromosome VI"/>
</dbReference>
<dbReference type="GO" id="GO:0030686">
    <property type="term" value="C:90S preribosome"/>
    <property type="evidence" value="ECO:0007669"/>
    <property type="project" value="EnsemblFungi"/>
</dbReference>
<dbReference type="GO" id="GO:0005730">
    <property type="term" value="C:nucleolus"/>
    <property type="evidence" value="ECO:0000318"/>
    <property type="project" value="GO_Central"/>
</dbReference>
<dbReference type="GO" id="GO:0005654">
    <property type="term" value="C:nucleoplasm"/>
    <property type="evidence" value="ECO:0007669"/>
    <property type="project" value="EnsemblFungi"/>
</dbReference>
<dbReference type="GO" id="GO:0030687">
    <property type="term" value="C:preribosome, large subunit precursor"/>
    <property type="evidence" value="ECO:0007669"/>
    <property type="project" value="EnsemblFungi"/>
</dbReference>
<dbReference type="GO" id="GO:0005524">
    <property type="term" value="F:ATP binding"/>
    <property type="evidence" value="ECO:0007669"/>
    <property type="project" value="UniProtKB-KW"/>
</dbReference>
<dbReference type="GO" id="GO:0016887">
    <property type="term" value="F:ATP hydrolysis activity"/>
    <property type="evidence" value="ECO:0007669"/>
    <property type="project" value="RHEA"/>
</dbReference>
<dbReference type="GO" id="GO:0003723">
    <property type="term" value="F:RNA binding"/>
    <property type="evidence" value="ECO:0007669"/>
    <property type="project" value="UniProtKB-KW"/>
</dbReference>
<dbReference type="GO" id="GO:0003724">
    <property type="term" value="F:RNA helicase activity"/>
    <property type="evidence" value="ECO:0007669"/>
    <property type="project" value="UniProtKB-EC"/>
</dbReference>
<dbReference type="GO" id="GO:1902626">
    <property type="term" value="P:assembly of large subunit precursor of preribosome"/>
    <property type="evidence" value="ECO:0007669"/>
    <property type="project" value="EnsemblFungi"/>
</dbReference>
<dbReference type="GO" id="GO:0000470">
    <property type="term" value="P:maturation of LSU-rRNA"/>
    <property type="evidence" value="ECO:0007669"/>
    <property type="project" value="EnsemblFungi"/>
</dbReference>
<dbReference type="CDD" id="cd17960">
    <property type="entry name" value="DEADc_DDX55"/>
    <property type="match status" value="1"/>
</dbReference>
<dbReference type="CDD" id="cd18787">
    <property type="entry name" value="SF2_C_DEAD"/>
    <property type="match status" value="1"/>
</dbReference>
<dbReference type="Gene3D" id="3.40.50.300">
    <property type="entry name" value="P-loop containing nucleotide triphosphate hydrolases"/>
    <property type="match status" value="2"/>
</dbReference>
<dbReference type="InterPro" id="IPR056330">
    <property type="entry name" value="CTT_SPB4"/>
</dbReference>
<dbReference type="InterPro" id="IPR011545">
    <property type="entry name" value="DEAD/DEAH_box_helicase_dom"/>
</dbReference>
<dbReference type="InterPro" id="IPR014001">
    <property type="entry name" value="Helicase_ATP-bd"/>
</dbReference>
<dbReference type="InterPro" id="IPR001650">
    <property type="entry name" value="Helicase_C-like"/>
</dbReference>
<dbReference type="InterPro" id="IPR027417">
    <property type="entry name" value="P-loop_NTPase"/>
</dbReference>
<dbReference type="InterPro" id="IPR000629">
    <property type="entry name" value="RNA-helicase_DEAD-box_CS"/>
</dbReference>
<dbReference type="InterPro" id="IPR014014">
    <property type="entry name" value="RNA_helicase_DEAD_Q_motif"/>
</dbReference>
<dbReference type="InterPro" id="IPR025313">
    <property type="entry name" value="SPB4-like_CTE"/>
</dbReference>
<dbReference type="PANTHER" id="PTHR24031">
    <property type="entry name" value="RNA HELICASE"/>
    <property type="match status" value="1"/>
</dbReference>
<dbReference type="Pfam" id="PF13959">
    <property type="entry name" value="CTE_SPB4"/>
    <property type="match status" value="1"/>
</dbReference>
<dbReference type="Pfam" id="PF23681">
    <property type="entry name" value="CTT_SPB4"/>
    <property type="match status" value="1"/>
</dbReference>
<dbReference type="Pfam" id="PF00270">
    <property type="entry name" value="DEAD"/>
    <property type="match status" value="1"/>
</dbReference>
<dbReference type="Pfam" id="PF00271">
    <property type="entry name" value="Helicase_C"/>
    <property type="match status" value="1"/>
</dbReference>
<dbReference type="SMART" id="SM00487">
    <property type="entry name" value="DEXDc"/>
    <property type="match status" value="1"/>
</dbReference>
<dbReference type="SMART" id="SM01178">
    <property type="entry name" value="DUF4217"/>
    <property type="match status" value="1"/>
</dbReference>
<dbReference type="SMART" id="SM00490">
    <property type="entry name" value="HELICc"/>
    <property type="match status" value="1"/>
</dbReference>
<dbReference type="SUPFAM" id="SSF52540">
    <property type="entry name" value="P-loop containing nucleoside triphosphate hydrolases"/>
    <property type="match status" value="2"/>
</dbReference>
<dbReference type="PROSITE" id="PS00039">
    <property type="entry name" value="DEAD_ATP_HELICASE"/>
    <property type="match status" value="1"/>
</dbReference>
<dbReference type="PROSITE" id="PS51192">
    <property type="entry name" value="HELICASE_ATP_BIND_1"/>
    <property type="match status" value="1"/>
</dbReference>
<dbReference type="PROSITE" id="PS51194">
    <property type="entry name" value="HELICASE_CTER"/>
    <property type="match status" value="1"/>
</dbReference>
<dbReference type="PROSITE" id="PS51195">
    <property type="entry name" value="Q_MOTIF"/>
    <property type="match status" value="1"/>
</dbReference>
<protein>
    <recommendedName>
        <fullName evidence="6">ATP-dependent rRNA helicase spb4</fullName>
        <ecNumber evidence="1">3.6.4.13</ecNumber>
    </recommendedName>
</protein>
<organism>
    <name type="scientific">Emericella nidulans (strain FGSC A4 / ATCC 38163 / CBS 112.46 / NRRL 194 / M139)</name>
    <name type="common">Aspergillus nidulans</name>
    <dbReference type="NCBI Taxonomy" id="227321"/>
    <lineage>
        <taxon>Eukaryota</taxon>
        <taxon>Fungi</taxon>
        <taxon>Dikarya</taxon>
        <taxon>Ascomycota</taxon>
        <taxon>Pezizomycotina</taxon>
        <taxon>Eurotiomycetes</taxon>
        <taxon>Eurotiomycetidae</taxon>
        <taxon>Eurotiales</taxon>
        <taxon>Aspergillaceae</taxon>
        <taxon>Aspergillus</taxon>
        <taxon>Aspergillus subgen. Nidulantes</taxon>
    </lineage>
</organism>
<sequence length="638" mass="71063">MAPKPPSGTSSRAWDAVNPPLSEWVLDAVSSMGFTRMTPVQASAIPLFMAHKDVVVEAVTGSGKTLSFLIPVVEKLLRLEEPIKKHHVGAIIVSPTRELASQIYNVLTSLLAFHPASAAVINTSETEDVPRPKHSSSVLRVVPQLLLGGSTSPAEDLSTFLKRSPNLLVATPGRLLELLSSPHVYCPQSSFEMLVLDEADRLLDLGFKETLQNILRRLPKQRRTGLFSASVSEAVDQIVRVGLRNPVKVVVKVKGASGVDDKRTPASLQMTYLTQPPTGKFPALKHILNSVQPTPSKSIFFVSTCSGVDYLSVILPLILGNDFQLIPLHGKHPANVRQKNFNRFVNAHNPAILLTTDVASRGLDIPSVDLVVQIDPPSDPKTFIHRCGRAGRAGRRGLSVVLLHPGREEDYVSFLEVRKTPVAPFPHPITVSDAEAAAATETARKVVKADRAIHDRGQKAFVSWLRSYSKHQASSIFRVADLDWEGLGKAWGLLKLPKMPELKNFKGDKTLGVQMDWDTYAYKDKQREKRRLELLQEMAESGQQQTTNKKRPNETVAWSNNAENRNKKAKRRDMKQVRQERKRWEKMTEEEKKKALETEQMLEQIRAKNEEQRRLKRAAAKADKDAEEGGDEEFTGFD</sequence>
<feature type="chain" id="PRO_0000232328" description="ATP-dependent rRNA helicase spb4">
    <location>
        <begin position="1"/>
        <end position="638"/>
    </location>
</feature>
<feature type="domain" description="Helicase ATP-binding" evidence="3">
    <location>
        <begin position="45"/>
        <end position="249"/>
    </location>
</feature>
<feature type="domain" description="Helicase C-terminal" evidence="4">
    <location>
        <begin position="283"/>
        <end position="437"/>
    </location>
</feature>
<feature type="region of interest" description="Disordered" evidence="5">
    <location>
        <begin position="538"/>
        <end position="638"/>
    </location>
</feature>
<feature type="coiled-coil region" evidence="2">
    <location>
        <begin position="521"/>
        <end position="629"/>
    </location>
</feature>
<feature type="short sequence motif" description="Q motif" evidence="6">
    <location>
        <begin position="14"/>
        <end position="42"/>
    </location>
</feature>
<feature type="short sequence motif" description="DEAD box" evidence="6">
    <location>
        <begin position="197"/>
        <end position="200"/>
    </location>
</feature>
<feature type="compositionally biased region" description="Basic and acidic residues" evidence="5">
    <location>
        <begin position="574"/>
        <end position="597"/>
    </location>
</feature>
<feature type="compositionally biased region" description="Acidic residues" evidence="5">
    <location>
        <begin position="625"/>
        <end position="638"/>
    </location>
</feature>
<feature type="binding site" evidence="3">
    <location>
        <begin position="58"/>
        <end position="65"/>
    </location>
    <ligand>
        <name>ATP</name>
        <dbReference type="ChEBI" id="CHEBI:30616"/>
    </ligand>
</feature>
<reference key="1">
    <citation type="journal article" date="2005" name="Nature">
        <title>Sequencing of Aspergillus nidulans and comparative analysis with A. fumigatus and A. oryzae.</title>
        <authorList>
            <person name="Galagan J.E."/>
            <person name="Calvo S.E."/>
            <person name="Cuomo C."/>
            <person name="Ma L.-J."/>
            <person name="Wortman J.R."/>
            <person name="Batzoglou S."/>
            <person name="Lee S.-I."/>
            <person name="Bastuerkmen M."/>
            <person name="Spevak C.C."/>
            <person name="Clutterbuck J."/>
            <person name="Kapitonov V."/>
            <person name="Jurka J."/>
            <person name="Scazzocchio C."/>
            <person name="Farman M.L."/>
            <person name="Butler J."/>
            <person name="Purcell S."/>
            <person name="Harris S."/>
            <person name="Braus G.H."/>
            <person name="Draht O."/>
            <person name="Busch S."/>
            <person name="D'Enfert C."/>
            <person name="Bouchier C."/>
            <person name="Goldman G.H."/>
            <person name="Bell-Pedersen D."/>
            <person name="Griffiths-Jones S."/>
            <person name="Doonan J.H."/>
            <person name="Yu J."/>
            <person name="Vienken K."/>
            <person name="Pain A."/>
            <person name="Freitag M."/>
            <person name="Selker E.U."/>
            <person name="Archer D.B."/>
            <person name="Penalva M.A."/>
            <person name="Oakley B.R."/>
            <person name="Momany M."/>
            <person name="Tanaka T."/>
            <person name="Kumagai T."/>
            <person name="Asai K."/>
            <person name="Machida M."/>
            <person name="Nierman W.C."/>
            <person name="Denning D.W."/>
            <person name="Caddick M.X."/>
            <person name="Hynes M."/>
            <person name="Paoletti M."/>
            <person name="Fischer R."/>
            <person name="Miller B.L."/>
            <person name="Dyer P.S."/>
            <person name="Sachs M.S."/>
            <person name="Osmani S.A."/>
            <person name="Birren B.W."/>
        </authorList>
    </citation>
    <scope>NUCLEOTIDE SEQUENCE [LARGE SCALE GENOMIC DNA]</scope>
    <source>
        <strain>FGSC A4 / ATCC 38163 / CBS 112.46 / NRRL 194 / M139</strain>
    </source>
</reference>
<reference key="2">
    <citation type="journal article" date="2009" name="Fungal Genet. Biol.">
        <title>The 2008 update of the Aspergillus nidulans genome annotation: a community effort.</title>
        <authorList>
            <person name="Wortman J.R."/>
            <person name="Gilsenan J.M."/>
            <person name="Joardar V."/>
            <person name="Deegan J."/>
            <person name="Clutterbuck J."/>
            <person name="Andersen M.R."/>
            <person name="Archer D."/>
            <person name="Bencina M."/>
            <person name="Braus G."/>
            <person name="Coutinho P."/>
            <person name="von Dohren H."/>
            <person name="Doonan J."/>
            <person name="Driessen A.J."/>
            <person name="Durek P."/>
            <person name="Espeso E."/>
            <person name="Fekete E."/>
            <person name="Flipphi M."/>
            <person name="Estrada C.G."/>
            <person name="Geysens S."/>
            <person name="Goldman G."/>
            <person name="de Groot P.W."/>
            <person name="Hansen K."/>
            <person name="Harris S.D."/>
            <person name="Heinekamp T."/>
            <person name="Helmstaedt K."/>
            <person name="Henrissat B."/>
            <person name="Hofmann G."/>
            <person name="Homan T."/>
            <person name="Horio T."/>
            <person name="Horiuchi H."/>
            <person name="James S."/>
            <person name="Jones M."/>
            <person name="Karaffa L."/>
            <person name="Karanyi Z."/>
            <person name="Kato M."/>
            <person name="Keller N."/>
            <person name="Kelly D.E."/>
            <person name="Kiel J.A."/>
            <person name="Kim J.M."/>
            <person name="van der Klei I.J."/>
            <person name="Klis F.M."/>
            <person name="Kovalchuk A."/>
            <person name="Krasevec N."/>
            <person name="Kubicek C.P."/>
            <person name="Liu B."/>
            <person name="Maccabe A."/>
            <person name="Meyer V."/>
            <person name="Mirabito P."/>
            <person name="Miskei M."/>
            <person name="Mos M."/>
            <person name="Mullins J."/>
            <person name="Nelson D.R."/>
            <person name="Nielsen J."/>
            <person name="Oakley B.R."/>
            <person name="Osmani S.A."/>
            <person name="Pakula T."/>
            <person name="Paszewski A."/>
            <person name="Paulsen I."/>
            <person name="Pilsyk S."/>
            <person name="Pocsi I."/>
            <person name="Punt P.J."/>
            <person name="Ram A.F."/>
            <person name="Ren Q."/>
            <person name="Robellet X."/>
            <person name="Robson G."/>
            <person name="Seiboth B."/>
            <person name="van Solingen P."/>
            <person name="Specht T."/>
            <person name="Sun J."/>
            <person name="Taheri-Talesh N."/>
            <person name="Takeshita N."/>
            <person name="Ussery D."/>
            <person name="vanKuyk P.A."/>
            <person name="Visser H."/>
            <person name="van de Vondervoort P.J."/>
            <person name="de Vries R.P."/>
            <person name="Walton J."/>
            <person name="Xiang X."/>
            <person name="Xiong Y."/>
            <person name="Zeng A.P."/>
            <person name="Brandt B.W."/>
            <person name="Cornell M.J."/>
            <person name="van den Hondel C.A."/>
            <person name="Visser J."/>
            <person name="Oliver S.G."/>
            <person name="Turner G."/>
        </authorList>
    </citation>
    <scope>GENOME REANNOTATION</scope>
    <source>
        <strain>FGSC A4 / ATCC 38163 / CBS 112.46 / NRRL 194 / M139</strain>
    </source>
</reference>